<reference key="1">
    <citation type="journal article" date="1996" name="Science">
        <title>Complete genome sequence of the methanogenic archaeon, Methanococcus jannaschii.</title>
        <authorList>
            <person name="Bult C.J."/>
            <person name="White O."/>
            <person name="Olsen G.J."/>
            <person name="Zhou L."/>
            <person name="Fleischmann R.D."/>
            <person name="Sutton G.G."/>
            <person name="Blake J.A."/>
            <person name="FitzGerald L.M."/>
            <person name="Clayton R.A."/>
            <person name="Gocayne J.D."/>
            <person name="Kerlavage A.R."/>
            <person name="Dougherty B.A."/>
            <person name="Tomb J.-F."/>
            <person name="Adams M.D."/>
            <person name="Reich C.I."/>
            <person name="Overbeek R."/>
            <person name="Kirkness E.F."/>
            <person name="Weinstock K.G."/>
            <person name="Merrick J.M."/>
            <person name="Glodek A."/>
            <person name="Scott J.L."/>
            <person name="Geoghagen N.S.M."/>
            <person name="Weidman J.F."/>
            <person name="Fuhrmann J.L."/>
            <person name="Nguyen D."/>
            <person name="Utterback T.R."/>
            <person name="Kelley J.M."/>
            <person name="Peterson J.D."/>
            <person name="Sadow P.W."/>
            <person name="Hanna M.C."/>
            <person name="Cotton M.D."/>
            <person name="Roberts K.M."/>
            <person name="Hurst M.A."/>
            <person name="Kaine B.P."/>
            <person name="Borodovsky M."/>
            <person name="Klenk H.-P."/>
            <person name="Fraser C.M."/>
            <person name="Smith H.O."/>
            <person name="Woese C.R."/>
            <person name="Venter J.C."/>
        </authorList>
    </citation>
    <scope>NUCLEOTIDE SEQUENCE [LARGE SCALE GENOMIC DNA]</scope>
    <source>
        <strain>ATCC 43067 / DSM 2661 / JAL-1 / JCM 10045 / NBRC 100440</strain>
    </source>
</reference>
<organism>
    <name type="scientific">Methanocaldococcus jannaschii (strain ATCC 43067 / DSM 2661 / JAL-1 / JCM 10045 / NBRC 100440)</name>
    <name type="common">Methanococcus jannaschii</name>
    <dbReference type="NCBI Taxonomy" id="243232"/>
    <lineage>
        <taxon>Archaea</taxon>
        <taxon>Methanobacteriati</taxon>
        <taxon>Methanobacteriota</taxon>
        <taxon>Methanomada group</taxon>
        <taxon>Methanococci</taxon>
        <taxon>Methanococcales</taxon>
        <taxon>Methanocaldococcaceae</taxon>
        <taxon>Methanocaldococcus</taxon>
    </lineage>
</organism>
<dbReference type="EMBL" id="L77117">
    <property type="protein sequence ID" value="AAB99319.1"/>
    <property type="molecule type" value="Genomic_DNA"/>
</dbReference>
<dbReference type="PIR" id="G64463">
    <property type="entry name" value="G64463"/>
</dbReference>
<dbReference type="RefSeq" id="WP_010870829.1">
    <property type="nucleotide sequence ID" value="NC_000909.1"/>
</dbReference>
<dbReference type="SMR" id="Q58708"/>
<dbReference type="STRING" id="243232.MJ_1312"/>
<dbReference type="PaxDb" id="243232-MJ_1312"/>
<dbReference type="DNASU" id="1452214"/>
<dbReference type="EnsemblBacteria" id="AAB99319">
    <property type="protein sequence ID" value="AAB99319"/>
    <property type="gene ID" value="MJ_1312"/>
</dbReference>
<dbReference type="GeneID" id="1452214"/>
<dbReference type="KEGG" id="mja:MJ_1312"/>
<dbReference type="eggNOG" id="arCOG00953">
    <property type="taxonomic scope" value="Archaea"/>
</dbReference>
<dbReference type="HOGENOM" id="CLU_058377_0_0_2"/>
<dbReference type="InParanoid" id="Q58708"/>
<dbReference type="OrthoDB" id="17974at2157"/>
<dbReference type="PhylomeDB" id="Q58708"/>
<dbReference type="Proteomes" id="UP000000805">
    <property type="component" value="Chromosome"/>
</dbReference>
<dbReference type="GO" id="GO:0051539">
    <property type="term" value="F:4 iron, 4 sulfur cluster binding"/>
    <property type="evidence" value="ECO:0007669"/>
    <property type="project" value="UniProtKB-KW"/>
</dbReference>
<dbReference type="GO" id="GO:0003824">
    <property type="term" value="F:catalytic activity"/>
    <property type="evidence" value="ECO:0007669"/>
    <property type="project" value="InterPro"/>
</dbReference>
<dbReference type="GO" id="GO:0046872">
    <property type="term" value="F:metal ion binding"/>
    <property type="evidence" value="ECO:0007669"/>
    <property type="project" value="UniProtKB-KW"/>
</dbReference>
<dbReference type="CDD" id="cd01335">
    <property type="entry name" value="Radical_SAM"/>
    <property type="match status" value="1"/>
</dbReference>
<dbReference type="Gene3D" id="3.20.20.70">
    <property type="entry name" value="Aldolase class I"/>
    <property type="match status" value="1"/>
</dbReference>
<dbReference type="InterPro" id="IPR013785">
    <property type="entry name" value="Aldolase_TIM"/>
</dbReference>
<dbReference type="InterPro" id="IPR006638">
    <property type="entry name" value="Elp3/MiaA/NifB-like_rSAM"/>
</dbReference>
<dbReference type="InterPro" id="IPR040084">
    <property type="entry name" value="GTPase_Obg"/>
</dbReference>
<dbReference type="InterPro" id="IPR007197">
    <property type="entry name" value="rSAM"/>
</dbReference>
<dbReference type="PANTHER" id="PTHR43787">
    <property type="entry name" value="FEMO COFACTOR BIOSYNTHESIS PROTEIN NIFB-RELATED"/>
    <property type="match status" value="1"/>
</dbReference>
<dbReference type="PANTHER" id="PTHR43787:SF11">
    <property type="entry name" value="UPF0026 PROTEIN SLR1464"/>
    <property type="match status" value="1"/>
</dbReference>
<dbReference type="Pfam" id="PF04055">
    <property type="entry name" value="Radical_SAM"/>
    <property type="match status" value="1"/>
</dbReference>
<dbReference type="SFLD" id="SFLDS00029">
    <property type="entry name" value="Radical_SAM"/>
    <property type="match status" value="1"/>
</dbReference>
<dbReference type="SFLD" id="SFLDG01083">
    <property type="entry name" value="Uncharacterised_Radical_SAM_Su"/>
    <property type="match status" value="1"/>
</dbReference>
<dbReference type="SMART" id="SM00729">
    <property type="entry name" value="Elp3"/>
    <property type="match status" value="1"/>
</dbReference>
<dbReference type="SUPFAM" id="SSF102114">
    <property type="entry name" value="Radical SAM enzymes"/>
    <property type="match status" value="1"/>
</dbReference>
<dbReference type="PROSITE" id="PS51918">
    <property type="entry name" value="RADICAL_SAM"/>
    <property type="match status" value="1"/>
</dbReference>
<accession>Q58708</accession>
<feature type="chain" id="PRO_0000217863" description="UPF0026 protein MJ1312">
    <location>
        <begin position="1"/>
        <end position="321"/>
    </location>
</feature>
<feature type="domain" description="Radical SAM core" evidence="2">
    <location>
        <begin position="11"/>
        <end position="236"/>
    </location>
</feature>
<feature type="binding site" evidence="1">
    <location>
        <position position="27"/>
    </location>
    <ligand>
        <name>[4Fe-4S] cluster</name>
        <dbReference type="ChEBI" id="CHEBI:49883"/>
        <note>4Fe-4S-S-AdoMet</note>
    </ligand>
</feature>
<feature type="binding site" evidence="1">
    <location>
        <position position="31"/>
    </location>
    <ligand>
        <name>[4Fe-4S] cluster</name>
        <dbReference type="ChEBI" id="CHEBI:49883"/>
        <note>4Fe-4S-S-AdoMet</note>
    </ligand>
</feature>
<feature type="binding site" evidence="1">
    <location>
        <position position="34"/>
    </location>
    <ligand>
        <name>[4Fe-4S] cluster</name>
        <dbReference type="ChEBI" id="CHEBI:49883"/>
        <note>4Fe-4S-S-AdoMet</note>
    </ligand>
</feature>
<keyword id="KW-0004">4Fe-4S</keyword>
<keyword id="KW-0408">Iron</keyword>
<keyword id="KW-0411">Iron-sulfur</keyword>
<keyword id="KW-0479">Metal-binding</keyword>
<keyword id="KW-1185">Reference proteome</keyword>
<keyword id="KW-0949">S-adenosyl-L-methionine</keyword>
<comment type="cofactor">
    <cofactor evidence="3">
        <name>[4Fe-4S] cluster</name>
        <dbReference type="ChEBI" id="CHEBI:49883"/>
    </cofactor>
    <text evidence="3">Binds 1 [4Fe-4S] cluster. The cluster is coordinated with 3 cysteines and an exchangeable S-adenosyl-L-methionine.</text>
</comment>
<comment type="similarity">
    <text evidence="3">Belongs to the UPF0026 family.</text>
</comment>
<proteinExistence type="inferred from homology"/>
<protein>
    <recommendedName>
        <fullName>UPF0026 protein MJ1312</fullName>
    </recommendedName>
</protein>
<name>Y1312_METJA</name>
<gene>
    <name type="ordered locus">MJ1312</name>
</gene>
<sequence>MTIAFGPVPSRRLGKSLGINSIPCKFCSYDCVYCQVGRTINKTIERREFYSPEDIFKSVEERIGKLNNEKIDYLTFVADGEPTLDINLSKEVEMLRDFDIPIAIITNSSLIWREDVRNDILNFDLVSFKVDSVDEKIWREINRPHKDLVLDKILEGMIAFRDNYKGELITETMILGSIKYTEESIIKTAEFLKELNPNKCYLNTPIRPPSEKYIKPPKIEVITKILAIFNEIIGKNKIKLLGKFEGNEFIFSENVEEDILAITSVHPMREEVIKELLNKSNISFDIINKMVNEGKLIKLEYDGKVFYMKNIKSRDKNVSNP</sequence>
<evidence type="ECO:0000255" key="1"/>
<evidence type="ECO:0000255" key="2">
    <source>
        <dbReference type="PROSITE-ProRule" id="PRU01266"/>
    </source>
</evidence>
<evidence type="ECO:0000305" key="3"/>